<dbReference type="EC" id="2.3.1.241" evidence="1 4"/>
<dbReference type="EMBL" id="X61000">
    <property type="protein sequence ID" value="CAA43317.1"/>
    <property type="molecule type" value="Genomic_DNA"/>
</dbReference>
<dbReference type="EMBL" id="U00096">
    <property type="protein sequence ID" value="AAC74138.1"/>
    <property type="molecule type" value="Genomic_DNA"/>
</dbReference>
<dbReference type="EMBL" id="AP009048">
    <property type="protein sequence ID" value="BAA35852.1"/>
    <property type="molecule type" value="Genomic_DNA"/>
</dbReference>
<dbReference type="EMBL" id="X59939">
    <property type="status" value="NOT_ANNOTATED_CDS"/>
    <property type="molecule type" value="Genomic_DNA"/>
</dbReference>
<dbReference type="PIR" id="S16888">
    <property type="entry name" value="S16888"/>
</dbReference>
<dbReference type="RefSeq" id="NP_415572.1">
    <property type="nucleotide sequence ID" value="NC_000913.3"/>
</dbReference>
<dbReference type="RefSeq" id="WP_000183364.1">
    <property type="nucleotide sequence ID" value="NZ_STEB01000016.1"/>
</dbReference>
<dbReference type="SMR" id="P0ACV0"/>
<dbReference type="BioGRID" id="4262842">
    <property type="interactions" value="80"/>
</dbReference>
<dbReference type="FunCoup" id="P0ACV0">
    <property type="interactions" value="348"/>
</dbReference>
<dbReference type="IntAct" id="P0ACV0">
    <property type="interactions" value="9"/>
</dbReference>
<dbReference type="STRING" id="511145.b1054"/>
<dbReference type="jPOST" id="P0ACV0"/>
<dbReference type="PaxDb" id="511145-b1054"/>
<dbReference type="EnsemblBacteria" id="AAC74138">
    <property type="protein sequence ID" value="AAC74138"/>
    <property type="gene ID" value="b1054"/>
</dbReference>
<dbReference type="GeneID" id="93776353"/>
<dbReference type="GeneID" id="946216"/>
<dbReference type="KEGG" id="ecj:JW1041"/>
<dbReference type="KEGG" id="eco:b1054"/>
<dbReference type="KEGG" id="ecoc:C3026_06415"/>
<dbReference type="PATRIC" id="fig|511145.12.peg.1095"/>
<dbReference type="EchoBASE" id="EB0459"/>
<dbReference type="eggNOG" id="COG1560">
    <property type="taxonomic scope" value="Bacteria"/>
</dbReference>
<dbReference type="HOGENOM" id="CLU_049421_1_1_6"/>
<dbReference type="InParanoid" id="P0ACV0"/>
<dbReference type="OMA" id="WRIERWF"/>
<dbReference type="OrthoDB" id="9803456at2"/>
<dbReference type="PhylomeDB" id="P0ACV0"/>
<dbReference type="BioCyc" id="EcoCyc:LAUROYLACYLTRAN-MONOMER"/>
<dbReference type="BioCyc" id="MetaCyc:LAUROYLACYLTRAN-MONOMER"/>
<dbReference type="BRENDA" id="2.3.1.241">
    <property type="organism ID" value="2026"/>
</dbReference>
<dbReference type="SABIO-RK" id="P0ACV0"/>
<dbReference type="UniPathway" id="UPA00030"/>
<dbReference type="UniPathway" id="UPA00360">
    <property type="reaction ID" value="UER00485"/>
</dbReference>
<dbReference type="PRO" id="PR:P0ACV0"/>
<dbReference type="Proteomes" id="UP000000625">
    <property type="component" value="Chromosome"/>
</dbReference>
<dbReference type="GO" id="GO:0016020">
    <property type="term" value="C:membrane"/>
    <property type="evidence" value="ECO:0000314"/>
    <property type="project" value="EcoliWiki"/>
</dbReference>
<dbReference type="GO" id="GO:0005886">
    <property type="term" value="C:plasma membrane"/>
    <property type="evidence" value="ECO:0000314"/>
    <property type="project" value="EcoCyc"/>
</dbReference>
<dbReference type="GO" id="GO:0016746">
    <property type="term" value="F:acyltransferase activity"/>
    <property type="evidence" value="ECO:0000318"/>
    <property type="project" value="GO_Central"/>
</dbReference>
<dbReference type="GO" id="GO:0008913">
    <property type="term" value="F:Kdo2-lipid IVA acyltransferase activity"/>
    <property type="evidence" value="ECO:0007669"/>
    <property type="project" value="UniProtKB-UniRule"/>
</dbReference>
<dbReference type="GO" id="GO:0016740">
    <property type="term" value="F:transferase activity"/>
    <property type="evidence" value="ECO:0000314"/>
    <property type="project" value="EcoCyc"/>
</dbReference>
<dbReference type="GO" id="GO:0036104">
    <property type="term" value="P:Kdo2-lipid A biosynthetic process"/>
    <property type="evidence" value="ECO:0007669"/>
    <property type="project" value="UniProtKB-UniRule"/>
</dbReference>
<dbReference type="GO" id="GO:0009245">
    <property type="term" value="P:lipid A biosynthetic process"/>
    <property type="evidence" value="ECO:0000315"/>
    <property type="project" value="EcoliWiki"/>
</dbReference>
<dbReference type="GO" id="GO:0009103">
    <property type="term" value="P:lipopolysaccharide biosynthetic process"/>
    <property type="evidence" value="ECO:0007669"/>
    <property type="project" value="UniProtKB-UniRule"/>
</dbReference>
<dbReference type="GO" id="GO:0006950">
    <property type="term" value="P:response to stress"/>
    <property type="evidence" value="ECO:0000315"/>
    <property type="project" value="EcoCyc"/>
</dbReference>
<dbReference type="CDD" id="cd07984">
    <property type="entry name" value="LPLAT_LABLAT-like"/>
    <property type="match status" value="1"/>
</dbReference>
<dbReference type="HAMAP" id="MF_01942">
    <property type="entry name" value="Lipid_A_LpxL_LpxP"/>
    <property type="match status" value="1"/>
</dbReference>
<dbReference type="InterPro" id="IPR004960">
    <property type="entry name" value="LipA_acyltrans"/>
</dbReference>
<dbReference type="InterPro" id="IPR011920">
    <property type="entry name" value="Lipid_A_LpxL_LpxP"/>
</dbReference>
<dbReference type="NCBIfam" id="TIGR02207">
    <property type="entry name" value="lipid_A_htrB"/>
    <property type="match status" value="1"/>
</dbReference>
<dbReference type="NCBIfam" id="NF005340">
    <property type="entry name" value="PRK06860.1"/>
    <property type="match status" value="1"/>
</dbReference>
<dbReference type="PANTHER" id="PTHR30606">
    <property type="entry name" value="LIPID A BIOSYNTHESIS LAUROYL ACYLTRANSFERASE"/>
    <property type="match status" value="1"/>
</dbReference>
<dbReference type="PANTHER" id="PTHR30606:SF9">
    <property type="entry name" value="LIPID A BIOSYNTHESIS LAUROYLTRANSFERASE"/>
    <property type="match status" value="1"/>
</dbReference>
<dbReference type="Pfam" id="PF03279">
    <property type="entry name" value="Lip_A_acyltrans"/>
    <property type="match status" value="1"/>
</dbReference>
<dbReference type="PIRSF" id="PIRSF026649">
    <property type="entry name" value="MsbB"/>
    <property type="match status" value="1"/>
</dbReference>
<evidence type="ECO:0000255" key="1">
    <source>
        <dbReference type="HAMAP-Rule" id="MF_01942"/>
    </source>
</evidence>
<evidence type="ECO:0000269" key="2">
    <source>
    </source>
</evidence>
<evidence type="ECO:0000269" key="3">
    <source>
    </source>
</evidence>
<evidence type="ECO:0000269" key="4">
    <source>
    </source>
</evidence>
<evidence type="ECO:0000269" key="5">
    <source>
    </source>
</evidence>
<evidence type="ECO:0000269" key="6">
    <source>
    </source>
</evidence>
<evidence type="ECO:0000303" key="7">
    <source>
    </source>
</evidence>
<evidence type="ECO:0000303" key="8">
    <source>
    </source>
</evidence>
<evidence type="ECO:0000305" key="9"/>
<evidence type="ECO:0000305" key="10">
    <source>
    </source>
</evidence>
<evidence type="ECO:0000312" key="11">
    <source>
        <dbReference type="EMBL" id="AAC74138.1"/>
    </source>
</evidence>
<evidence type="ECO:0000312" key="12">
    <source>
        <dbReference type="EMBL" id="BAA35852.1"/>
    </source>
</evidence>
<protein>
    <recommendedName>
        <fullName evidence="1 8">Lipid A biosynthesis lauroyltransferase</fullName>
        <ecNumber evidence="1 4">2.3.1.241</ecNumber>
    </recommendedName>
    <alternativeName>
        <fullName evidence="1">Kdo(2)-lipid IV(A) lauroyltransferase</fullName>
    </alternativeName>
</protein>
<sequence length="306" mass="35407">MTNLPKFSTALLHPRYWLTWLGIGVLWLVVQLPYPVIYRLGCGLGKLALRFMKRRAKIVHRNLELCFPEMSEQERRKMVVKNFESVGMGLMETGMAWFWPDRRIARWTEVIGMEHIRDVQAQKRGILLVGIHFLTLELGARQFGMQEPGIGVYRPNDNPLIDWLQTWGRLRSNKSMLDRKDLKGMIKALKKGEVVWYAPDHDYGPRSSVFVPLFAVEQAATTTGTWMLARMSGACLVPFVPRRKPDGKGYQLIMLPPECSPPLDDAETTAAWMNKVVEKCIMMAPEQYMWLHRRFKTRPEGVPSRY</sequence>
<accession>P0ACV0</accession>
<accession>P24187</accession>
<gene>
    <name evidence="1 8" type="primary">lpxL</name>
    <name evidence="7" type="synonym">htrB</name>
    <name type="synonym">waaM</name>
    <name evidence="11" type="ordered locus">b1054</name>
    <name evidence="12" type="ordered locus">JW1041</name>
</gene>
<feature type="chain" id="PRO_0000201774" description="Lipid A biosynthesis lauroyltransferase">
    <location>
        <begin position="1"/>
        <end position="306"/>
    </location>
</feature>
<feature type="transmembrane region" description="Helical" evidence="1">
    <location>
        <begin position="17"/>
        <end position="37"/>
    </location>
</feature>
<feature type="short sequence motif" description="HXXXXD motif" evidence="1 10">
    <location>
        <begin position="132"/>
        <end position="137"/>
    </location>
</feature>
<feature type="mutagenesis site" description="Almost loss of activity." evidence="4">
    <original>H</original>
    <variation>A</variation>
    <location>
        <position position="132"/>
    </location>
</feature>
<feature type="mutagenesis site" description="Almost loss of activity." evidence="4">
    <original>E</original>
    <variation>A</variation>
    <location>
        <position position="137"/>
    </location>
</feature>
<feature type="mutagenesis site" description="169-fold decrease in activity." evidence="4">
    <original>R</original>
    <variation>A</variation>
    <location>
        <position position="169"/>
    </location>
</feature>
<feature type="mutagenesis site" description="14-fold decrease in activity." evidence="4">
    <original>D</original>
    <variation>A</variation>
    <location>
        <position position="200"/>
    </location>
</feature>
<feature type="mutagenesis site" description="Slight decrease in activity." evidence="4">
    <original>P</original>
    <variation>A</variation>
    <location>
        <position position="238"/>
    </location>
</feature>
<organism>
    <name type="scientific">Escherichia coli (strain K12)</name>
    <dbReference type="NCBI Taxonomy" id="83333"/>
    <lineage>
        <taxon>Bacteria</taxon>
        <taxon>Pseudomonadati</taxon>
        <taxon>Pseudomonadota</taxon>
        <taxon>Gammaproteobacteria</taxon>
        <taxon>Enterobacterales</taxon>
        <taxon>Enterobacteriaceae</taxon>
        <taxon>Escherichia</taxon>
    </lineage>
</organism>
<reference key="1">
    <citation type="journal article" date="1991" name="Mol. Microbiol.">
        <title>Sequencing, mutational analysis, and transcriptional regulation of the Escherichia coli htrB gene.</title>
        <authorList>
            <person name="Karow M.L."/>
            <person name="Georgopoulos C."/>
        </authorList>
    </citation>
    <scope>NUCLEOTIDE SEQUENCE [GENOMIC DNA]</scope>
    <scope>INDUCTION</scope>
    <source>
        <strain>K12</strain>
    </source>
</reference>
<reference key="2">
    <citation type="journal article" date="1996" name="DNA Res.">
        <title>A 718-kb DNA sequence of the Escherichia coli K-12 genome corresponding to the 12.7-28.0 min region on the linkage map.</title>
        <authorList>
            <person name="Oshima T."/>
            <person name="Aiba H."/>
            <person name="Baba T."/>
            <person name="Fujita K."/>
            <person name="Hayashi K."/>
            <person name="Honjo A."/>
            <person name="Ikemoto K."/>
            <person name="Inada T."/>
            <person name="Itoh T."/>
            <person name="Kajihara M."/>
            <person name="Kanai K."/>
            <person name="Kashimoto K."/>
            <person name="Kimura S."/>
            <person name="Kitagawa M."/>
            <person name="Makino K."/>
            <person name="Masuda S."/>
            <person name="Miki T."/>
            <person name="Mizobuchi K."/>
            <person name="Mori H."/>
            <person name="Motomura K."/>
            <person name="Nakamura Y."/>
            <person name="Nashimoto H."/>
            <person name="Nishio Y."/>
            <person name="Saito N."/>
            <person name="Sampei G."/>
            <person name="Seki Y."/>
            <person name="Tagami H."/>
            <person name="Takemoto K."/>
            <person name="Wada C."/>
            <person name="Yamamoto Y."/>
            <person name="Yano M."/>
            <person name="Horiuchi T."/>
        </authorList>
    </citation>
    <scope>NUCLEOTIDE SEQUENCE [LARGE SCALE GENOMIC DNA]</scope>
    <source>
        <strain>K12 / W3110 / ATCC 27325 / DSM 5911</strain>
    </source>
</reference>
<reference key="3">
    <citation type="journal article" date="1997" name="Science">
        <title>The complete genome sequence of Escherichia coli K-12.</title>
        <authorList>
            <person name="Blattner F.R."/>
            <person name="Plunkett G. III"/>
            <person name="Bloch C.A."/>
            <person name="Perna N.T."/>
            <person name="Burland V."/>
            <person name="Riley M."/>
            <person name="Collado-Vides J."/>
            <person name="Glasner J.D."/>
            <person name="Rode C.K."/>
            <person name="Mayhew G.F."/>
            <person name="Gregor J."/>
            <person name="Davis N.W."/>
            <person name="Kirkpatrick H.A."/>
            <person name="Goeden M.A."/>
            <person name="Rose D.J."/>
            <person name="Mau B."/>
            <person name="Shao Y."/>
        </authorList>
    </citation>
    <scope>NUCLEOTIDE SEQUENCE [LARGE SCALE GENOMIC DNA]</scope>
    <source>
        <strain>K12 / MG1655 / ATCC 47076</strain>
    </source>
</reference>
<reference key="4">
    <citation type="journal article" date="2006" name="Mol. Syst. Biol.">
        <title>Highly accurate genome sequences of Escherichia coli K-12 strains MG1655 and W3110.</title>
        <authorList>
            <person name="Hayashi K."/>
            <person name="Morooka N."/>
            <person name="Yamamoto Y."/>
            <person name="Fujita K."/>
            <person name="Isono K."/>
            <person name="Choi S."/>
            <person name="Ohtsubo E."/>
            <person name="Baba T."/>
            <person name="Wanner B.L."/>
            <person name="Mori H."/>
            <person name="Horiuchi T."/>
        </authorList>
    </citation>
    <scope>NUCLEOTIDE SEQUENCE [LARGE SCALE GENOMIC DNA]</scope>
    <source>
        <strain>K12 / W3110 / ATCC 27325 / DSM 5911</strain>
    </source>
</reference>
<reference key="5">
    <citation type="journal article" date="1992" name="J. Bacteriol.">
        <title>Multicopy suppression: an approach to understanding intracellular functioning of the protein export system.</title>
        <authorList>
            <person name="Ueguchi C."/>
            <person name="Ito K."/>
        </authorList>
    </citation>
    <scope>NUCLEOTIDE SEQUENCE [GENOMIC DNA] OF 200-306</scope>
    <source>
        <strain>K12</strain>
    </source>
</reference>
<reference key="6">
    <citation type="journal article" date="1990" name="J. Biol. Chem.">
        <title>Biosynthesis of lipid A in Escherichia coli. Acyl carrier protein-dependent incorporation of laurate and myristate.</title>
        <authorList>
            <person name="Brozek K.A."/>
            <person name="Raetz C.R.H."/>
        </authorList>
    </citation>
    <scope>FUNCTION</scope>
    <scope>PATHWAY</scope>
</reference>
<reference key="7">
    <citation type="journal article" date="1991" name="J. Bacteriol.">
        <title>Isolation and characterization of the Escherichia coli htrB gene, whose product is essential for bacterial viability above 33 degrees C in rich media.</title>
        <authorList>
            <person name="Karow M."/>
            <person name="Fayet O."/>
            <person name="Cegielska A."/>
            <person name="Ziegelhoffer T."/>
            <person name="Georgopoulos C."/>
        </authorList>
    </citation>
    <scope>SUBCELLULAR LOCATION</scope>
    <scope>DISRUPTION PHENOTYPE</scope>
</reference>
<reference key="8">
    <citation type="journal article" date="1996" name="J. Biol. Chem.">
        <title>Function of the htrB high temperature requirement gene of Escherchia coli in the acylation of lipid A: HtrB catalyzed incorporation of laurate.</title>
        <authorList>
            <person name="Clementz T."/>
            <person name="Bednarski J.J."/>
            <person name="Raetz C.R."/>
        </authorList>
    </citation>
    <scope>FUNCTION</scope>
    <scope>PATHWAY</scope>
    <scope>SUBCELLULAR LOCATION</scope>
    <source>
        <strain>K12 / W3110 / ATCC 27325 / DSM 5911</strain>
    </source>
</reference>
<reference key="9">
    <citation type="journal article" date="2008" name="Biochemistry">
        <title>Purification and mutagenesis of LpxL, the lauroyltransferase of Escherichia coli lipid A biosynthesis.</title>
        <authorList>
            <person name="Six D.A."/>
            <person name="Carty S.M."/>
            <person name="Guan Z."/>
            <person name="Raetz C.R."/>
        </authorList>
    </citation>
    <scope>FUNCTION</scope>
    <scope>CATALYTIC ACTIVITY</scope>
    <scope>BIOPHYSICOCHEMICAL PROPERTIES</scope>
    <scope>PATHWAY</scope>
    <scope>SUBUNIT</scope>
    <scope>SUBCELLULAR LOCATION</scope>
    <scope>MUTAGENESIS OF HIS-132; GLU-137; ARG-169; ASP-200 AND PRO-238</scope>
</reference>
<proteinExistence type="evidence at protein level"/>
<keyword id="KW-0012">Acyltransferase</keyword>
<keyword id="KW-0997">Cell inner membrane</keyword>
<keyword id="KW-1003">Cell membrane</keyword>
<keyword id="KW-0448">Lipopolysaccharide biosynthesis</keyword>
<keyword id="KW-0472">Membrane</keyword>
<keyword id="KW-1185">Reference proteome</keyword>
<keyword id="KW-0808">Transferase</keyword>
<keyword id="KW-0812">Transmembrane</keyword>
<keyword id="KW-1133">Transmembrane helix</keyword>
<comment type="function">
    <text evidence="4 5 6">Catalyzes the transfer of laurate from lauroyl-[acyl-carrier-protein] (ACP) to Kdo(2)-lipid IV(A) to form Kdo(2)-(lauroyl)-lipid IV(A). Has 10 fold selectivity for lauroyl-ACP over myristoyl-ACP. In vitro, can also catalyze a slow second acylation reaction leading to the formation of Kdo(2)-(dilauroyl)-lipid IV(A).</text>
</comment>
<comment type="catalytic activity">
    <reaction evidence="1 4">
        <text>dodecanoyl-[ACP] + alpha-Kdo-(2-&gt;4)-alpha-Kdo-(2-&gt;6)-lipid IVA (E. coli) = alpha-Kdo-(2-&gt;4)-alpha-Kdo-(2-&gt;6)-(dodecanoyl)-lipid IVA (E. coli) + holo-[ACP]</text>
        <dbReference type="Rhea" id="RHEA:28442"/>
        <dbReference type="Rhea" id="RHEA-COMP:9644"/>
        <dbReference type="Rhea" id="RHEA-COMP:9685"/>
        <dbReference type="ChEBI" id="CHEBI:60365"/>
        <dbReference type="ChEBI" id="CHEBI:61524"/>
        <dbReference type="ChEBI" id="CHEBI:64479"/>
        <dbReference type="ChEBI" id="CHEBI:65264"/>
        <dbReference type="EC" id="2.3.1.241"/>
    </reaction>
</comment>
<comment type="biophysicochemical properties">
    <kinetics>
        <KM evidence="4">7 uM for lauroyl-ACP</KM>
        <KM evidence="4">15 uM for Kdo(2)-lipid IV(A)</KM>
        <Vmax evidence="4">95.0 umol/min/mg enzyme toward lauroyl-ACP</Vmax>
        <Vmax evidence="4">221.0 umol/min/mg enzyme toward Kdo(2)-lipid IV(A)</Vmax>
    </kinetics>
</comment>
<comment type="pathway">
    <text evidence="1 4 5 6">Glycolipid biosynthesis; KDO(2)-lipid A biosynthesis; KDO(2)-lipid A from CMP-3-deoxy-D-manno-octulosonate and lipid IV(A): step 3/4.</text>
</comment>
<comment type="pathway">
    <text evidence="1 4 5 6">Bacterial outer membrane biogenesis; lipopolysaccharide biosynthesis.</text>
</comment>
<comment type="subunit">
    <text evidence="4">Monomer.</text>
</comment>
<comment type="subcellular location">
    <subcellularLocation>
        <location evidence="1 3 4 6">Cell inner membrane</location>
        <topology evidence="1">Single-pass membrane protein</topology>
    </subcellularLocation>
</comment>
<comment type="induction">
    <text evidence="2">Is expressed at all temperatures, but accumulation of htrB transcripts slightly declines with raising temperature. Thus, its expression is not induced by heat shock.</text>
</comment>
<comment type="disruption phenotype">
    <text evidence="3">Inactivation leads to bacterial death at temperatures above 33 degrees Celsius. Phenotype at nonpermissive temperatures includes an arrest of cell division followed by the formation of bulges or filaments.</text>
</comment>
<comment type="similarity">
    <text evidence="1 9">Belongs to the LpxL/LpxM/LpxP family.</text>
</comment>
<name>LPXL_ECOLI</name>